<name>RETM_ANOGA</name>
<keyword id="KW-0496">Mitochondrion</keyword>
<keyword id="KW-1185">Reference proteome</keyword>
<proteinExistence type="inferred from homology"/>
<gene>
    <name evidence="1" type="primary">retm</name>
    <name type="ORF">AGAP009029</name>
</gene>
<reference evidence="5" key="1">
    <citation type="journal article" date="2002" name="Science">
        <title>The genome sequence of the malaria mosquito Anopheles gambiae.</title>
        <authorList>
            <person name="Holt R.A."/>
            <person name="Subramanian G.M."/>
            <person name="Halpern A."/>
            <person name="Sutton G.G."/>
            <person name="Charlab R."/>
            <person name="Nusskern D.R."/>
            <person name="Wincker P."/>
            <person name="Clark A.G."/>
            <person name="Ribeiro J.M.C."/>
            <person name="Wides R."/>
            <person name="Salzberg S.L."/>
            <person name="Loftus B.J."/>
            <person name="Yandell M.D."/>
            <person name="Majoros W.H."/>
            <person name="Rusch D.B."/>
            <person name="Lai Z."/>
            <person name="Kraft C.L."/>
            <person name="Abril J.F."/>
            <person name="Anthouard V."/>
            <person name="Arensburger P."/>
            <person name="Atkinson P.W."/>
            <person name="Baden H."/>
            <person name="de Berardinis V."/>
            <person name="Baldwin D."/>
            <person name="Benes V."/>
            <person name="Biedler J."/>
            <person name="Blass C."/>
            <person name="Bolanos R."/>
            <person name="Boscus D."/>
            <person name="Barnstead M."/>
            <person name="Cai S."/>
            <person name="Center A."/>
            <person name="Chaturverdi K."/>
            <person name="Christophides G.K."/>
            <person name="Chrystal M.A.M."/>
            <person name="Clamp M."/>
            <person name="Cravchik A."/>
            <person name="Curwen V."/>
            <person name="Dana A."/>
            <person name="Delcher A."/>
            <person name="Dew I."/>
            <person name="Evans C.A."/>
            <person name="Flanigan M."/>
            <person name="Grundschober-Freimoser A."/>
            <person name="Friedli L."/>
            <person name="Gu Z."/>
            <person name="Guan P."/>
            <person name="Guigo R."/>
            <person name="Hillenmeyer M.E."/>
            <person name="Hladun S.L."/>
            <person name="Hogan J.R."/>
            <person name="Hong Y.S."/>
            <person name="Hoover J."/>
            <person name="Jaillon O."/>
            <person name="Ke Z."/>
            <person name="Kodira C.D."/>
            <person name="Kokoza E."/>
            <person name="Koutsos A."/>
            <person name="Letunic I."/>
            <person name="Levitsky A.A."/>
            <person name="Liang Y."/>
            <person name="Lin J.-J."/>
            <person name="Lobo N.F."/>
            <person name="Lopez J.R."/>
            <person name="Malek J.A."/>
            <person name="McIntosh T.C."/>
            <person name="Meister S."/>
            <person name="Miller J.R."/>
            <person name="Mobarry C."/>
            <person name="Mongin E."/>
            <person name="Murphy S.D."/>
            <person name="O'Brochta D.A."/>
            <person name="Pfannkoch C."/>
            <person name="Qi R."/>
            <person name="Regier M.A."/>
            <person name="Remington K."/>
            <person name="Shao H."/>
            <person name="Sharakhova M.V."/>
            <person name="Sitter C.D."/>
            <person name="Shetty J."/>
            <person name="Smith T.J."/>
            <person name="Strong R."/>
            <person name="Sun J."/>
            <person name="Thomasova D."/>
            <person name="Ton L.Q."/>
            <person name="Topalis P."/>
            <person name="Tu Z.J."/>
            <person name="Unger M.F."/>
            <person name="Walenz B."/>
            <person name="Wang A.H."/>
            <person name="Wang J."/>
            <person name="Wang M."/>
            <person name="Wang X."/>
            <person name="Woodford K.J."/>
            <person name="Wortman J.R."/>
            <person name="Wu M."/>
            <person name="Yao A."/>
            <person name="Zdobnov E.M."/>
            <person name="Zhang H."/>
            <person name="Zhao Q."/>
            <person name="Zhao S."/>
            <person name="Zhu S.C."/>
            <person name="Zhimulev I."/>
            <person name="Coluzzi M."/>
            <person name="della Torre A."/>
            <person name="Roth C.W."/>
            <person name="Louis C."/>
            <person name="Kalush F."/>
            <person name="Mural R.J."/>
            <person name="Myers E.W."/>
            <person name="Adams M.D."/>
            <person name="Smith H.O."/>
            <person name="Broder S."/>
            <person name="Gardner M.J."/>
            <person name="Fraser C.M."/>
            <person name="Birney E."/>
            <person name="Bork P."/>
            <person name="Brey P.T."/>
            <person name="Venter J.C."/>
            <person name="Weissenbach J."/>
            <person name="Kafatos F.C."/>
            <person name="Collins F.H."/>
            <person name="Hoffman S.L."/>
        </authorList>
    </citation>
    <scope>NUCLEOTIDE SEQUENCE [LARGE SCALE GENOMIC DNA]</scope>
    <source>
        <strain evidence="5">PEST</strain>
    </source>
</reference>
<comment type="subcellular location">
    <subcellularLocation>
        <location evidence="1">Mitochondrion</location>
    </subcellularLocation>
</comment>
<evidence type="ECO:0000250" key="1">
    <source>
        <dbReference type="UniProtKB" id="Q9VMD6"/>
    </source>
</evidence>
<evidence type="ECO:0000255" key="2"/>
<evidence type="ECO:0000255" key="3">
    <source>
        <dbReference type="PROSITE-ProRule" id="PRU00056"/>
    </source>
</evidence>
<evidence type="ECO:0000255" key="4">
    <source>
        <dbReference type="PROSITE-ProRule" id="PRU00158"/>
    </source>
</evidence>
<evidence type="ECO:0000312" key="5">
    <source>
        <dbReference type="EMBL" id="EAA14774.4"/>
    </source>
</evidence>
<organism>
    <name type="scientific">Anopheles gambiae</name>
    <name type="common">African malaria mosquito</name>
    <dbReference type="NCBI Taxonomy" id="7165"/>
    <lineage>
        <taxon>Eukaryota</taxon>
        <taxon>Metazoa</taxon>
        <taxon>Ecdysozoa</taxon>
        <taxon>Arthropoda</taxon>
        <taxon>Hexapoda</taxon>
        <taxon>Insecta</taxon>
        <taxon>Pterygota</taxon>
        <taxon>Neoptera</taxon>
        <taxon>Endopterygota</taxon>
        <taxon>Diptera</taxon>
        <taxon>Nematocera</taxon>
        <taxon>Culicoidea</taxon>
        <taxon>Culicidae</taxon>
        <taxon>Anophelinae</taxon>
        <taxon>Anopheles</taxon>
    </lineage>
</organism>
<dbReference type="EMBL" id="AAAB01008984">
    <property type="protein sequence ID" value="EAA14774.4"/>
    <property type="molecule type" value="Genomic_DNA"/>
</dbReference>
<dbReference type="RefSeq" id="XP_319779.4">
    <property type="nucleotide sequence ID" value="XM_319779.4"/>
</dbReference>
<dbReference type="SMR" id="Q7PWB1"/>
<dbReference type="FunCoup" id="Q7PWB1">
    <property type="interactions" value="1479"/>
</dbReference>
<dbReference type="STRING" id="7165.Q7PWB1"/>
<dbReference type="VEuPathDB" id="VectorBase:AGAMI1_000042"/>
<dbReference type="VEuPathDB" id="VectorBase:AGAP009029"/>
<dbReference type="InParanoid" id="Q7PWB1"/>
<dbReference type="PhylomeDB" id="Q7PWB1"/>
<dbReference type="Proteomes" id="UP000007062">
    <property type="component" value="Chromosome 3R"/>
</dbReference>
<dbReference type="GO" id="GO:0005737">
    <property type="term" value="C:cytoplasm"/>
    <property type="evidence" value="ECO:0000318"/>
    <property type="project" value="GO_Central"/>
</dbReference>
<dbReference type="GO" id="GO:0005739">
    <property type="term" value="C:mitochondrion"/>
    <property type="evidence" value="ECO:0000250"/>
    <property type="project" value="UniProtKB"/>
</dbReference>
<dbReference type="CDD" id="cd00170">
    <property type="entry name" value="SEC14"/>
    <property type="match status" value="1"/>
</dbReference>
<dbReference type="FunFam" id="2.60.120.680:FF:000009">
    <property type="entry name" value="Blast:Protein real-time"/>
    <property type="match status" value="1"/>
</dbReference>
<dbReference type="Gene3D" id="3.40.525.10">
    <property type="entry name" value="CRAL-TRIO lipid binding domain"/>
    <property type="match status" value="1"/>
</dbReference>
<dbReference type="Gene3D" id="2.60.120.680">
    <property type="entry name" value="GOLD domain"/>
    <property type="match status" value="1"/>
</dbReference>
<dbReference type="InterPro" id="IPR001251">
    <property type="entry name" value="CRAL-TRIO_dom"/>
</dbReference>
<dbReference type="InterPro" id="IPR036865">
    <property type="entry name" value="CRAL-TRIO_dom_sf"/>
</dbReference>
<dbReference type="InterPro" id="IPR011074">
    <property type="entry name" value="CRAL/TRIO_N_dom"/>
</dbReference>
<dbReference type="InterPro" id="IPR036273">
    <property type="entry name" value="CRAL/TRIO_N_dom_sf"/>
</dbReference>
<dbReference type="InterPro" id="IPR036598">
    <property type="entry name" value="GOLD_dom_sf"/>
</dbReference>
<dbReference type="InterPro" id="IPR006797">
    <property type="entry name" value="PRELI/MSF1_dom"/>
</dbReference>
<dbReference type="InterPro" id="IPR051064">
    <property type="entry name" value="SEC14/CRAL-TRIO_domain"/>
</dbReference>
<dbReference type="PANTHER" id="PTHR23324:SF66">
    <property type="entry name" value="PROTEIN REAL-TIME"/>
    <property type="match status" value="1"/>
</dbReference>
<dbReference type="PANTHER" id="PTHR23324">
    <property type="entry name" value="SEC14 RELATED PROTEIN"/>
    <property type="match status" value="1"/>
</dbReference>
<dbReference type="Pfam" id="PF00650">
    <property type="entry name" value="CRAL_TRIO"/>
    <property type="match status" value="1"/>
</dbReference>
<dbReference type="Pfam" id="PF03765">
    <property type="entry name" value="CRAL_TRIO_N"/>
    <property type="match status" value="1"/>
</dbReference>
<dbReference type="Pfam" id="PF04707">
    <property type="entry name" value="PRELI"/>
    <property type="match status" value="1"/>
</dbReference>
<dbReference type="SMART" id="SM01100">
    <property type="entry name" value="CRAL_TRIO_N"/>
    <property type="match status" value="1"/>
</dbReference>
<dbReference type="SMART" id="SM00516">
    <property type="entry name" value="SEC14"/>
    <property type="match status" value="1"/>
</dbReference>
<dbReference type="SUPFAM" id="SSF52087">
    <property type="entry name" value="CRAL/TRIO domain"/>
    <property type="match status" value="1"/>
</dbReference>
<dbReference type="SUPFAM" id="SSF46938">
    <property type="entry name" value="CRAL/TRIO N-terminal domain"/>
    <property type="match status" value="1"/>
</dbReference>
<dbReference type="SUPFAM" id="SSF101576">
    <property type="entry name" value="Supernatant protein factor (SPF), C-terminal domain"/>
    <property type="match status" value="1"/>
</dbReference>
<dbReference type="PROSITE" id="PS50191">
    <property type="entry name" value="CRAL_TRIO"/>
    <property type="match status" value="1"/>
</dbReference>
<dbReference type="PROSITE" id="PS50904">
    <property type="entry name" value="PRELI_MSF1"/>
    <property type="match status" value="1"/>
</dbReference>
<protein>
    <recommendedName>
        <fullName>Protein real-time</fullName>
    </recommendedName>
</protein>
<feature type="chain" id="PRO_0000312683" description="Protein real-time">
    <location>
        <begin position="1"/>
        <end position="684"/>
    </location>
</feature>
<feature type="domain" description="PRELI/MSF1" evidence="4">
    <location>
        <begin position="2"/>
        <end position="178"/>
    </location>
</feature>
<feature type="domain" description="CRAL-TRIO" evidence="3">
    <location>
        <begin position="297"/>
        <end position="474"/>
    </location>
</feature>
<feature type="domain" description="GOLD" evidence="2">
    <location>
        <begin position="537"/>
        <end position="684"/>
    </location>
</feature>
<sequence length="684" mass="78012">MVQKYESPVRIYKYPFELVVAGFRNFCRQKSVLRRGKVCEMGSIFGEAKTTTNTWCIRRWSFAVVCKKIIIEEFLFLFVKHQLYQYLCNHIVNIEYAYHKPYNSFATRVEIFEKCRYYAHPENPDWTCFDQTATLDIKNFFGIEHSMEKMGMKQYTQTTLKGKEIIEFFVNELKQEGITHVDRWVDDATVTSTTAGAATNTTPPEKPPLCRDNSILDADYIAKYLGQLTPLQESKLVQLRKRFEHGTSEHPEPDYQTLLRFLRARDFSIDKATGMLQESLQWRKEQRIDSILGEYKTPAVVEKYFPGGWHHHDKDGRPLYILRLGTMDVKGLLKSVGEDELLKLTLHICEEGLRLMKEATKLFGKPVWNWCLLVDLDGLSMRHLWRPGVKALLRIIETVETNYPETMGRVLIVRAPRVFPVLWTIVSTFIDENTRSKFLFFGGPDCMHAEDGIEQYIDTDKIPSFLGGSCNVIDCPIVALPNSVCVNRPVSSSSFDSSIVKLSPPPALSPHAFCSVATAIAYSLHFATLNGGIAHDHHGLYKAVDLKPGQLFELLIRNTDPKSVLTWDFEVLKNDTLFAVFHTEKEIEQSGNDDFSSVFDGPDFKEGTNYKKIEQSVKCRPKEGVQGSHEMASTGTYVLQWMCPPSCDGPAQLMYFHEILSSANYKGSMTSLQSGFSSNSLQSR</sequence>
<accession>Q7PWB1</accession>